<dbReference type="EMBL" id="AF529201">
    <property type="protein sequence ID" value="AAP47226.1"/>
    <property type="molecule type" value="mRNA"/>
</dbReference>
<dbReference type="PIR" id="PH0084">
    <property type="entry name" value="PH0084"/>
</dbReference>
<dbReference type="RefSeq" id="NP_001385287.1">
    <property type="nucleotide sequence ID" value="NM_001398358.1"/>
</dbReference>
<dbReference type="SMR" id="P82007"/>
<dbReference type="Allergome" id="2862">
    <property type="allergen name" value="Hel a 3"/>
</dbReference>
<dbReference type="Allergome" id="3308">
    <property type="allergen name" value="Hel a 3.0101"/>
</dbReference>
<dbReference type="EnsemblPlants" id="mRNA:HanXRQr2_Chr15g0684801">
    <property type="protein sequence ID" value="mRNA:HanXRQr2_Chr15g0684801"/>
    <property type="gene ID" value="HanXRQr2_Chr15g0684801"/>
</dbReference>
<dbReference type="GeneID" id="110905652"/>
<dbReference type="Gramene" id="mRNA:HanXRQr2_Chr15g0684801">
    <property type="protein sequence ID" value="mRNA:HanXRQr2_Chr15g0684801"/>
    <property type="gene ID" value="HanXRQr2_Chr15g0684801"/>
</dbReference>
<dbReference type="OMA" id="STIACCN"/>
<dbReference type="OrthoDB" id="649864at2759"/>
<dbReference type="PhylomeDB" id="P82007"/>
<dbReference type="GO" id="GO:0005576">
    <property type="term" value="C:extracellular region"/>
    <property type="evidence" value="ECO:0007669"/>
    <property type="project" value="UniProtKB-SubCell"/>
</dbReference>
<dbReference type="GO" id="GO:0016020">
    <property type="term" value="C:membrane"/>
    <property type="evidence" value="ECO:0007669"/>
    <property type="project" value="UniProtKB-SubCell"/>
</dbReference>
<dbReference type="GO" id="GO:0008289">
    <property type="term" value="F:lipid binding"/>
    <property type="evidence" value="ECO:0007669"/>
    <property type="project" value="UniProtKB-KW"/>
</dbReference>
<dbReference type="GO" id="GO:0050832">
    <property type="term" value="P:defense response to fungus"/>
    <property type="evidence" value="ECO:0007669"/>
    <property type="project" value="UniProtKB-KW"/>
</dbReference>
<dbReference type="GO" id="GO:0031640">
    <property type="term" value="P:killing of cells of another organism"/>
    <property type="evidence" value="ECO:0007669"/>
    <property type="project" value="UniProtKB-KW"/>
</dbReference>
<dbReference type="GO" id="GO:0006869">
    <property type="term" value="P:lipid transport"/>
    <property type="evidence" value="ECO:0007669"/>
    <property type="project" value="InterPro"/>
</dbReference>
<dbReference type="CDD" id="cd01960">
    <property type="entry name" value="nsLTP1"/>
    <property type="match status" value="1"/>
</dbReference>
<dbReference type="Gene3D" id="1.10.110.10">
    <property type="entry name" value="Plant lipid-transfer and hydrophobic proteins"/>
    <property type="match status" value="1"/>
</dbReference>
<dbReference type="InterPro" id="IPR036312">
    <property type="entry name" value="Bifun_inhib/LTP/seed_sf"/>
</dbReference>
<dbReference type="InterPro" id="IPR016140">
    <property type="entry name" value="Bifunc_inhib/LTP/seed_store"/>
</dbReference>
<dbReference type="InterPro" id="IPR000528">
    <property type="entry name" value="Plant_nsLTP"/>
</dbReference>
<dbReference type="PANTHER" id="PTHR33076">
    <property type="entry name" value="NON-SPECIFIC LIPID-TRANSFER PROTEIN 2-RELATED"/>
    <property type="match status" value="1"/>
</dbReference>
<dbReference type="Pfam" id="PF00234">
    <property type="entry name" value="Tryp_alpha_amyl"/>
    <property type="match status" value="1"/>
</dbReference>
<dbReference type="PRINTS" id="PR00382">
    <property type="entry name" value="LIPIDTRNSFER"/>
</dbReference>
<dbReference type="SMART" id="SM00499">
    <property type="entry name" value="AAI"/>
    <property type="match status" value="1"/>
</dbReference>
<dbReference type="SUPFAM" id="SSF47699">
    <property type="entry name" value="Bifunctional inhibitor/lipid-transfer protein/seed storage 2S albumin"/>
    <property type="match status" value="1"/>
</dbReference>
<protein>
    <recommendedName>
        <fullName>Non-specific lipid-transfer protein AP10</fullName>
        <shortName>Ha-AP10</shortName>
        <shortName>LTP</shortName>
        <shortName>NsLTP</shortName>
    </recommendedName>
</protein>
<evidence type="ECO:0000250" key="1"/>
<evidence type="ECO:0000269" key="2">
    <source>
    </source>
</evidence>
<evidence type="ECO:0000269" key="3">
    <source>
    </source>
</evidence>
<evidence type="ECO:0000269" key="4">
    <source>
    </source>
</evidence>
<evidence type="ECO:0000269" key="5">
    <source>
    </source>
</evidence>
<evidence type="ECO:0000269" key="6">
    <source>
    </source>
</evidence>
<evidence type="ECO:0000269" key="7">
    <source ref="3"/>
</evidence>
<evidence type="ECO:0000305" key="8"/>
<accession>P82007</accession>
<accession>Q7M1P2</accession>
<accession>Q7X9Q5</accession>
<name>NLTP1_HELAN</name>
<organism>
    <name type="scientific">Helianthus annuus</name>
    <name type="common">Common sunflower</name>
    <dbReference type="NCBI Taxonomy" id="4232"/>
    <lineage>
        <taxon>Eukaryota</taxon>
        <taxon>Viridiplantae</taxon>
        <taxon>Streptophyta</taxon>
        <taxon>Embryophyta</taxon>
        <taxon>Tracheophyta</taxon>
        <taxon>Spermatophyta</taxon>
        <taxon>Magnoliopsida</taxon>
        <taxon>eudicotyledons</taxon>
        <taxon>Gunneridae</taxon>
        <taxon>Pentapetalae</taxon>
        <taxon>asterids</taxon>
        <taxon>campanulids</taxon>
        <taxon>Asterales</taxon>
        <taxon>Asteraceae</taxon>
        <taxon>Asteroideae</taxon>
        <taxon>Heliantheae alliance</taxon>
        <taxon>Heliantheae</taxon>
        <taxon>Helianthus</taxon>
    </lineage>
</organism>
<feature type="signal peptide" evidence="6 7">
    <location>
        <begin position="1"/>
        <end position="26"/>
    </location>
</feature>
<feature type="chain" id="PRO_0000153873" description="Non-specific lipid-transfer protein AP10">
    <location>
        <begin position="27"/>
        <end position="116"/>
    </location>
</feature>
<feature type="disulfide bond" evidence="1">
    <location>
        <begin position="29"/>
        <end position="76"/>
    </location>
</feature>
<feature type="disulfide bond" evidence="1">
    <location>
        <begin position="39"/>
        <end position="53"/>
    </location>
</feature>
<feature type="disulfide bond" evidence="1">
    <location>
        <begin position="54"/>
        <end position="98"/>
    </location>
</feature>
<feature type="disulfide bond" evidence="1">
    <location>
        <begin position="74"/>
        <end position="112"/>
    </location>
</feature>
<feature type="sequence conflict" description="In Ref. 2; AA sequence and 3; AA sequence." evidence="8" ref="2 3">
    <original>G</original>
    <variation>S</variation>
    <location>
        <position position="46"/>
    </location>
</feature>
<comment type="function">
    <text evidence="3 4 6 7">Plant non-specific lipid-transfer proteins transfer phospholipids as well as galactolipids across membranes. May play a role in wax or cutin deposition in the cell walls of expanding epidermal cells and certain secretory tissues. Permeabilizes the membrane of fungal spores, inhibits germination of the spores of the fungus F.solani at a concentration of 40 ug/ml. Inhibits the growth of F.solani with an IC(50) of 6.5 ug/ml, weakly inhibits the growth of the fungus A.alternata. Binds oleoyl-CoA.</text>
</comment>
<comment type="subcellular location">
    <subcellularLocation>
        <location>Secreted</location>
        <location>Extracellular space</location>
    </subcellularLocation>
    <subcellularLocation>
        <location>Membrane</location>
    </subcellularLocation>
    <text>Present intracellularly, associated with unidentified structures.</text>
</comment>
<comment type="tissue specificity">
    <text evidence="2 4 5">In germinating seeds, detected in the entire surface of the cotyledons, shoot meristem, inter-cotyledon space, primary xylem and immature vascular elements (at protein level). Expressed in seeds, but not the aerial parts of the plant.</text>
</comment>
<comment type="developmental stage">
    <text evidence="4">Present during at least the first 5 days of germination.</text>
</comment>
<comment type="induction">
    <text evidence="4">By salt stress, abscisic acid (ABA) and fungal infection.</text>
</comment>
<comment type="similarity">
    <text evidence="8">Belongs to the plant LTP family.</text>
</comment>
<sequence length="116" mass="11954">MKGTSMGVAILAMIVMAQLMVHPSVAITCNDVTGNLTPCLPYLRSGGKPTPACCAGAKKLLGATRTQADRRTACKCAKTAAPQLKVRPDMASSLPGKCGISTSIPINPNVNCNTIP</sequence>
<reference key="1">
    <citation type="journal article" date="2003" name="J. Plant Physiol.">
        <title>A cDNA encoding a putative lipid transfer protein expressed in sunflower seeds.</title>
        <authorList>
            <person name="Regente M."/>
            <person name="de la Canal L."/>
        </authorList>
    </citation>
    <scope>NUCLEOTIDE SEQUENCE [MRNA]</scope>
    <scope>TISSUE SPECIFICITY</scope>
    <source>
        <strain>AR10018</strain>
        <tissue>Seed</tissue>
    </source>
</reference>
<reference key="2">
    <citation type="journal article" date="1990" name="Mol. Cell. Biochem.">
        <title>Bifunctional lipid-transfer: fatty acid-binding proteins in plants.</title>
        <authorList>
            <person name="Arondel V."/>
            <person name="Vergnolle C."/>
            <person name="Tchang F."/>
            <person name="Kader J.-C."/>
        </authorList>
    </citation>
    <scope>PROTEIN SEQUENCE OF 27-50</scope>
    <scope>FUNCTION</scope>
    <source>
        <strain>cv. Rodeo</strain>
        <tissue>Seed</tissue>
    </source>
</reference>
<reference key="3">
    <citation type="journal article" date="2000" name="Physiol. Plantarum">
        <title>Purification, characterization and antifungal properties of a lipid-transfer protein from sunflower (Helianthus annuus) seeds.</title>
        <authorList>
            <person name="Regente M.C."/>
            <person name="de la Canal L."/>
        </authorList>
    </citation>
    <scope>PROTEIN SEQUENCE OF 27-46</scope>
    <scope>FUNCTION</scope>
    <scope>SUBCELLULAR LOCATION</scope>
    <source>
        <strain>AR10018</strain>
        <tissue>Seed</tissue>
    </source>
</reference>
<reference key="4">
    <citation type="journal article" date="2005" name="J. Plant Physiol.">
        <title>Stress induction and antimicrobial properties of a lipid transfer protein in germinating sunflower seeds.</title>
        <authorList>
            <person name="Gonorazky A.G."/>
            <person name="Regente M.C."/>
            <person name="de la Canal L."/>
        </authorList>
    </citation>
    <scope>FUNCTION</scope>
    <scope>TISSUE SPECIFICITY</scope>
    <scope>DEVELOPMENTAL STAGE</scope>
    <scope>INDUCTION</scope>
</reference>
<reference key="5">
    <citation type="journal article" date="2005" name="Lett. Appl. Microbiol.">
        <title>The cytotoxic properties of a plant lipid transfer protein involve membrane permeabilization of target cells.</title>
        <authorList>
            <person name="Regente M.C."/>
            <person name="Giudici A.M."/>
            <person name="Villalain J."/>
            <person name="de la Canal L."/>
        </authorList>
    </citation>
    <scope>FUNCTION</scope>
</reference>
<reference key="6">
    <citation type="journal article" date="2009" name="J. Plant Physiol.">
        <title>Unexpected localization of a lipid transfer protein in germinating sunflower seeds.</title>
        <authorList>
            <person name="Pagnussat L.A."/>
            <person name="Lombardo C."/>
            <person name="Regente M."/>
            <person name="Pinedo M."/>
            <person name="Martin M."/>
            <person name="de la Canal L."/>
        </authorList>
    </citation>
    <scope>SUBCELLULAR LOCATION</scope>
    <scope>TISSUE SPECIFICITY</scope>
</reference>
<proteinExistence type="evidence at protein level"/>
<keyword id="KW-0929">Antimicrobial</keyword>
<keyword id="KW-0903">Direct protein sequencing</keyword>
<keyword id="KW-1015">Disulfide bond</keyword>
<keyword id="KW-0295">Fungicide</keyword>
<keyword id="KW-0446">Lipid-binding</keyword>
<keyword id="KW-0472">Membrane</keyword>
<keyword id="KW-0611">Plant defense</keyword>
<keyword id="KW-0964">Secreted</keyword>
<keyword id="KW-0732">Signal</keyword>
<keyword id="KW-0813">Transport</keyword>